<feature type="chain" id="PRO_1000046858" description="Cobalt-precorrin-5B C(1)-methyltransferase">
    <location>
        <begin position="1"/>
        <end position="379"/>
    </location>
</feature>
<protein>
    <recommendedName>
        <fullName evidence="1">Cobalt-precorrin-5B C(1)-methyltransferase</fullName>
        <ecNumber evidence="1">2.1.1.195</ecNumber>
    </recommendedName>
    <alternativeName>
        <fullName evidence="1">Cobalt-precorrin-6A synthase</fullName>
    </alternativeName>
</protein>
<reference key="1">
    <citation type="submission" date="2006-09" db="EMBL/GenBank/DDBJ databases">
        <authorList>
            <consortium name="The Klebsiella pneumonia Genome Sequencing Project"/>
            <person name="McClelland M."/>
            <person name="Sanderson E.K."/>
            <person name="Spieth J."/>
            <person name="Clifton W.S."/>
            <person name="Latreille P."/>
            <person name="Sabo A."/>
            <person name="Pepin K."/>
            <person name="Bhonagiri V."/>
            <person name="Porwollik S."/>
            <person name="Ali J."/>
            <person name="Wilson R.K."/>
        </authorList>
    </citation>
    <scope>NUCLEOTIDE SEQUENCE [LARGE SCALE GENOMIC DNA]</scope>
    <source>
        <strain>ATCC 700721 / MGH 78578</strain>
    </source>
</reference>
<name>CBID_KLEP7</name>
<dbReference type="EC" id="2.1.1.195" evidence="1"/>
<dbReference type="EMBL" id="CP000647">
    <property type="protein sequence ID" value="ABR78595.1"/>
    <property type="molecule type" value="Genomic_DNA"/>
</dbReference>
<dbReference type="RefSeq" id="WP_015958918.1">
    <property type="nucleotide sequence ID" value="NC_009648.1"/>
</dbReference>
<dbReference type="SMR" id="A6TDC4"/>
<dbReference type="STRING" id="272620.KPN_03197"/>
<dbReference type="PaxDb" id="272620-KPN_03197"/>
<dbReference type="EnsemblBacteria" id="ABR78595">
    <property type="protein sequence ID" value="ABR78595"/>
    <property type="gene ID" value="KPN_03197"/>
</dbReference>
<dbReference type="KEGG" id="kpn:KPN_03197"/>
<dbReference type="HOGENOM" id="CLU_041273_1_0_6"/>
<dbReference type="UniPathway" id="UPA00148">
    <property type="reaction ID" value="UER00227"/>
</dbReference>
<dbReference type="Proteomes" id="UP000000265">
    <property type="component" value="Chromosome"/>
</dbReference>
<dbReference type="GO" id="GO:0043780">
    <property type="term" value="F:cobalt-precorrin-5B C1-methyltransferase activity"/>
    <property type="evidence" value="ECO:0007669"/>
    <property type="project" value="RHEA"/>
</dbReference>
<dbReference type="GO" id="GO:0019251">
    <property type="term" value="P:anaerobic cobalamin biosynthetic process"/>
    <property type="evidence" value="ECO:0007669"/>
    <property type="project" value="UniProtKB-UniRule"/>
</dbReference>
<dbReference type="GO" id="GO:0032259">
    <property type="term" value="P:methylation"/>
    <property type="evidence" value="ECO:0007669"/>
    <property type="project" value="UniProtKB-KW"/>
</dbReference>
<dbReference type="Gene3D" id="3.30.2110.10">
    <property type="entry name" value="CbiD-like"/>
    <property type="match status" value="1"/>
</dbReference>
<dbReference type="HAMAP" id="MF_00787">
    <property type="entry name" value="CbiD"/>
    <property type="match status" value="1"/>
</dbReference>
<dbReference type="InterPro" id="IPR002748">
    <property type="entry name" value="CbiD"/>
</dbReference>
<dbReference type="InterPro" id="IPR036074">
    <property type="entry name" value="CbiD_sf"/>
</dbReference>
<dbReference type="NCBIfam" id="TIGR00312">
    <property type="entry name" value="cbiD"/>
    <property type="match status" value="1"/>
</dbReference>
<dbReference type="PANTHER" id="PTHR35863">
    <property type="entry name" value="COBALT-PRECORRIN-5B C(1)-METHYLTRANSFERASE"/>
    <property type="match status" value="1"/>
</dbReference>
<dbReference type="PANTHER" id="PTHR35863:SF1">
    <property type="entry name" value="COBALT-PRECORRIN-5B C(1)-METHYLTRANSFERASE"/>
    <property type="match status" value="1"/>
</dbReference>
<dbReference type="Pfam" id="PF01888">
    <property type="entry name" value="CbiD"/>
    <property type="match status" value="1"/>
</dbReference>
<dbReference type="PIRSF" id="PIRSF026782">
    <property type="entry name" value="CbiD"/>
    <property type="match status" value="1"/>
</dbReference>
<dbReference type="SUPFAM" id="SSF111342">
    <property type="entry name" value="CbiD-like"/>
    <property type="match status" value="1"/>
</dbReference>
<gene>
    <name evidence="1" type="primary">cbiD</name>
    <name type="ordered locus">KPN78578_31340</name>
    <name type="ORF">KPN_03197</name>
</gene>
<accession>A6TDC4</accession>
<sequence length="379" mass="40966">MSDQTFDAPVWHHGKALRKGYTTGSCATAAAKVAALMVMRQHLIHQVSIVTPSGVTLCLNVESPHVEGQQAVAAIRKDGGDDVDATHGMLIFARVTLNDSGEISLQGGEGIGTVTRKGIGLPTGSPAINRTPRHTIETAVREAIGPTRGAQVEIFAPEGVLRAQKTYNARLGILGGISIIGTTGIVTPMSEESWKRSLSLELEIKRAAGLERVVLVPGNHGERFVREQMGIDPQMVVTMSNFVGYMIEEAVRLGFRQIVLIGHPGKLIKIAAGIFHTHSHIADARMETLVAHLALLGAPLPLLTLVSECDTTEAAMEHIDAWGYQRLYNHLAERICQRVLEMLRFTQQPPTCDAVLFSFDNQVLGSSRPLAAIARELTC</sequence>
<evidence type="ECO:0000255" key="1">
    <source>
        <dbReference type="HAMAP-Rule" id="MF_00787"/>
    </source>
</evidence>
<proteinExistence type="inferred from homology"/>
<organism>
    <name type="scientific">Klebsiella pneumoniae subsp. pneumoniae (strain ATCC 700721 / MGH 78578)</name>
    <dbReference type="NCBI Taxonomy" id="272620"/>
    <lineage>
        <taxon>Bacteria</taxon>
        <taxon>Pseudomonadati</taxon>
        <taxon>Pseudomonadota</taxon>
        <taxon>Gammaproteobacteria</taxon>
        <taxon>Enterobacterales</taxon>
        <taxon>Enterobacteriaceae</taxon>
        <taxon>Klebsiella/Raoultella group</taxon>
        <taxon>Klebsiella</taxon>
        <taxon>Klebsiella pneumoniae complex</taxon>
    </lineage>
</organism>
<comment type="function">
    <text evidence="1">Catalyzes the methylation of C-1 in cobalt-precorrin-5B to form cobalt-precorrin-6A.</text>
</comment>
<comment type="catalytic activity">
    <reaction evidence="1">
        <text>Co-precorrin-5B + S-adenosyl-L-methionine = Co-precorrin-6A + S-adenosyl-L-homocysteine</text>
        <dbReference type="Rhea" id="RHEA:26285"/>
        <dbReference type="ChEBI" id="CHEBI:57856"/>
        <dbReference type="ChEBI" id="CHEBI:59789"/>
        <dbReference type="ChEBI" id="CHEBI:60063"/>
        <dbReference type="ChEBI" id="CHEBI:60064"/>
        <dbReference type="EC" id="2.1.1.195"/>
    </reaction>
</comment>
<comment type="pathway">
    <text evidence="1">Cofactor biosynthesis; adenosylcobalamin biosynthesis; cob(II)yrinate a,c-diamide from sirohydrochlorin (anaerobic route): step 6/10.</text>
</comment>
<comment type="similarity">
    <text evidence="1">Belongs to the CbiD family.</text>
</comment>
<keyword id="KW-0169">Cobalamin biosynthesis</keyword>
<keyword id="KW-0489">Methyltransferase</keyword>
<keyword id="KW-0949">S-adenosyl-L-methionine</keyword>
<keyword id="KW-0808">Transferase</keyword>